<comment type="function">
    <text evidence="1">Can catalyze the hydrolysis of ATP in the presence of single-stranded DNA, the ATP-dependent uptake of single-stranded DNA by duplex DNA, and the ATP-dependent hybridization of homologous single-stranded DNAs. It interacts with LexA causing its activation and leading to its autocatalytic cleavage.</text>
</comment>
<comment type="subcellular location">
    <subcellularLocation>
        <location evidence="1">Cytoplasm</location>
    </subcellularLocation>
</comment>
<comment type="similarity">
    <text evidence="1">Belongs to the RecA family.</text>
</comment>
<dbReference type="EMBL" id="CP000453">
    <property type="protein sequence ID" value="ABI56832.1"/>
    <property type="molecule type" value="Genomic_DNA"/>
</dbReference>
<dbReference type="RefSeq" id="WP_011629227.1">
    <property type="nucleotide sequence ID" value="NC_008340.1"/>
</dbReference>
<dbReference type="SMR" id="Q0A8K5"/>
<dbReference type="KEGG" id="aeh:Mlg_1483"/>
<dbReference type="eggNOG" id="COG0468">
    <property type="taxonomic scope" value="Bacteria"/>
</dbReference>
<dbReference type="HOGENOM" id="CLU_040469_3_2_6"/>
<dbReference type="OrthoDB" id="9776733at2"/>
<dbReference type="Proteomes" id="UP000001962">
    <property type="component" value="Chromosome"/>
</dbReference>
<dbReference type="GO" id="GO:0005829">
    <property type="term" value="C:cytosol"/>
    <property type="evidence" value="ECO:0007669"/>
    <property type="project" value="TreeGrafter"/>
</dbReference>
<dbReference type="GO" id="GO:0005524">
    <property type="term" value="F:ATP binding"/>
    <property type="evidence" value="ECO:0007669"/>
    <property type="project" value="UniProtKB-UniRule"/>
</dbReference>
<dbReference type="GO" id="GO:0016887">
    <property type="term" value="F:ATP hydrolysis activity"/>
    <property type="evidence" value="ECO:0007669"/>
    <property type="project" value="InterPro"/>
</dbReference>
<dbReference type="GO" id="GO:0140664">
    <property type="term" value="F:ATP-dependent DNA damage sensor activity"/>
    <property type="evidence" value="ECO:0007669"/>
    <property type="project" value="InterPro"/>
</dbReference>
<dbReference type="GO" id="GO:0003684">
    <property type="term" value="F:damaged DNA binding"/>
    <property type="evidence" value="ECO:0007669"/>
    <property type="project" value="UniProtKB-UniRule"/>
</dbReference>
<dbReference type="GO" id="GO:0003697">
    <property type="term" value="F:single-stranded DNA binding"/>
    <property type="evidence" value="ECO:0007669"/>
    <property type="project" value="UniProtKB-UniRule"/>
</dbReference>
<dbReference type="GO" id="GO:0006310">
    <property type="term" value="P:DNA recombination"/>
    <property type="evidence" value="ECO:0007669"/>
    <property type="project" value="UniProtKB-UniRule"/>
</dbReference>
<dbReference type="GO" id="GO:0006281">
    <property type="term" value="P:DNA repair"/>
    <property type="evidence" value="ECO:0007669"/>
    <property type="project" value="UniProtKB-UniRule"/>
</dbReference>
<dbReference type="GO" id="GO:0009432">
    <property type="term" value="P:SOS response"/>
    <property type="evidence" value="ECO:0007669"/>
    <property type="project" value="UniProtKB-UniRule"/>
</dbReference>
<dbReference type="CDD" id="cd00983">
    <property type="entry name" value="RecA"/>
    <property type="match status" value="1"/>
</dbReference>
<dbReference type="FunFam" id="3.40.50.300:FF:000087">
    <property type="entry name" value="Recombinase RecA"/>
    <property type="match status" value="1"/>
</dbReference>
<dbReference type="Gene3D" id="3.40.50.300">
    <property type="entry name" value="P-loop containing nucleotide triphosphate hydrolases"/>
    <property type="match status" value="1"/>
</dbReference>
<dbReference type="HAMAP" id="MF_00268">
    <property type="entry name" value="RecA"/>
    <property type="match status" value="1"/>
</dbReference>
<dbReference type="InterPro" id="IPR003593">
    <property type="entry name" value="AAA+_ATPase"/>
</dbReference>
<dbReference type="InterPro" id="IPR013765">
    <property type="entry name" value="DNA_recomb/repair_RecA"/>
</dbReference>
<dbReference type="InterPro" id="IPR020584">
    <property type="entry name" value="DNA_recomb/repair_RecA_CS"/>
</dbReference>
<dbReference type="InterPro" id="IPR027417">
    <property type="entry name" value="P-loop_NTPase"/>
</dbReference>
<dbReference type="InterPro" id="IPR049261">
    <property type="entry name" value="RecA-like_C"/>
</dbReference>
<dbReference type="InterPro" id="IPR049428">
    <property type="entry name" value="RecA-like_N"/>
</dbReference>
<dbReference type="InterPro" id="IPR020588">
    <property type="entry name" value="RecA_ATP-bd"/>
</dbReference>
<dbReference type="InterPro" id="IPR023400">
    <property type="entry name" value="RecA_C_sf"/>
</dbReference>
<dbReference type="InterPro" id="IPR020587">
    <property type="entry name" value="RecA_monomer-monomer_interface"/>
</dbReference>
<dbReference type="NCBIfam" id="TIGR02012">
    <property type="entry name" value="tigrfam_recA"/>
    <property type="match status" value="1"/>
</dbReference>
<dbReference type="PANTHER" id="PTHR45900:SF1">
    <property type="entry name" value="MITOCHONDRIAL DNA REPAIR PROTEIN RECA HOMOLOG-RELATED"/>
    <property type="match status" value="1"/>
</dbReference>
<dbReference type="PANTHER" id="PTHR45900">
    <property type="entry name" value="RECA"/>
    <property type="match status" value="1"/>
</dbReference>
<dbReference type="Pfam" id="PF00154">
    <property type="entry name" value="RecA"/>
    <property type="match status" value="1"/>
</dbReference>
<dbReference type="Pfam" id="PF21096">
    <property type="entry name" value="RecA_C"/>
    <property type="match status" value="1"/>
</dbReference>
<dbReference type="PRINTS" id="PR00142">
    <property type="entry name" value="RECA"/>
</dbReference>
<dbReference type="SMART" id="SM00382">
    <property type="entry name" value="AAA"/>
    <property type="match status" value="1"/>
</dbReference>
<dbReference type="SUPFAM" id="SSF52540">
    <property type="entry name" value="P-loop containing nucleoside triphosphate hydrolases"/>
    <property type="match status" value="1"/>
</dbReference>
<dbReference type="SUPFAM" id="SSF54752">
    <property type="entry name" value="RecA protein, C-terminal domain"/>
    <property type="match status" value="1"/>
</dbReference>
<dbReference type="PROSITE" id="PS00321">
    <property type="entry name" value="RECA_1"/>
    <property type="match status" value="1"/>
</dbReference>
<dbReference type="PROSITE" id="PS50162">
    <property type="entry name" value="RECA_2"/>
    <property type="match status" value="1"/>
</dbReference>
<dbReference type="PROSITE" id="PS50163">
    <property type="entry name" value="RECA_3"/>
    <property type="match status" value="1"/>
</dbReference>
<evidence type="ECO:0000255" key="1">
    <source>
        <dbReference type="HAMAP-Rule" id="MF_00268"/>
    </source>
</evidence>
<evidence type="ECO:0000256" key="2">
    <source>
        <dbReference type="SAM" id="MobiDB-lite"/>
    </source>
</evidence>
<keyword id="KW-0067">ATP-binding</keyword>
<keyword id="KW-0963">Cytoplasm</keyword>
<keyword id="KW-0227">DNA damage</keyword>
<keyword id="KW-0233">DNA recombination</keyword>
<keyword id="KW-0234">DNA repair</keyword>
<keyword id="KW-0238">DNA-binding</keyword>
<keyword id="KW-0547">Nucleotide-binding</keyword>
<keyword id="KW-1185">Reference proteome</keyword>
<keyword id="KW-0742">SOS response</keyword>
<organism>
    <name type="scientific">Alkalilimnicola ehrlichii (strain ATCC BAA-1101 / DSM 17681 / MLHE-1)</name>
    <dbReference type="NCBI Taxonomy" id="187272"/>
    <lineage>
        <taxon>Bacteria</taxon>
        <taxon>Pseudomonadati</taxon>
        <taxon>Pseudomonadota</taxon>
        <taxon>Gammaproteobacteria</taxon>
        <taxon>Chromatiales</taxon>
        <taxon>Ectothiorhodospiraceae</taxon>
        <taxon>Alkalilimnicola</taxon>
    </lineage>
</organism>
<accession>Q0A8K5</accession>
<feature type="chain" id="PRO_1000047884" description="Protein RecA">
    <location>
        <begin position="1"/>
        <end position="347"/>
    </location>
</feature>
<feature type="region of interest" description="Disordered" evidence="2">
    <location>
        <begin position="326"/>
        <end position="347"/>
    </location>
</feature>
<feature type="compositionally biased region" description="Polar residues" evidence="2">
    <location>
        <begin position="336"/>
        <end position="347"/>
    </location>
</feature>
<feature type="binding site" evidence="1">
    <location>
        <begin position="67"/>
        <end position="74"/>
    </location>
    <ligand>
        <name>ATP</name>
        <dbReference type="ChEBI" id="CHEBI:30616"/>
    </ligand>
</feature>
<sequence>MDENRKKALGAALGQIERQFGKGAVMRMGDARAVRGDVEVISTGSLQLDIALGVGGLPKGRVVEIYGPESSGKTTLTLHAIAEAQKAGGTAAFVDAEHALDPDYAEKLGVNLDDLLVSQPDTGEQALEITDMLVRSGAVDVVVVDSVAALTPKAEIEGEMGDSHVGLQARLMSQALRKLTANIKRSNTLVIFINQIRMKIGVMFGSPETTTGGNALKFYSSVRMDIRRLGAIKKGDEVLGNETRVKVVKNKMAPPFKQAEFEILYGQGISHEGELIDLGVKEGLIEKAGAWYSHNGDRIGQGKDNVRNYLKEHPELAAELEKQIRDKLLPGRAPSSEAQGTESGQEA</sequence>
<reference key="1">
    <citation type="submission" date="2006-08" db="EMBL/GenBank/DDBJ databases">
        <title>Complete sequence of Alkalilimnicola ehrilichei MLHE-1.</title>
        <authorList>
            <person name="Copeland A."/>
            <person name="Lucas S."/>
            <person name="Lapidus A."/>
            <person name="Barry K."/>
            <person name="Detter J.C."/>
            <person name="Glavina del Rio T."/>
            <person name="Hammon N."/>
            <person name="Israni S."/>
            <person name="Dalin E."/>
            <person name="Tice H."/>
            <person name="Pitluck S."/>
            <person name="Sims D."/>
            <person name="Brettin T."/>
            <person name="Bruce D."/>
            <person name="Han C."/>
            <person name="Tapia R."/>
            <person name="Gilna P."/>
            <person name="Schmutz J."/>
            <person name="Larimer F."/>
            <person name="Land M."/>
            <person name="Hauser L."/>
            <person name="Kyrpides N."/>
            <person name="Mikhailova N."/>
            <person name="Oremland R.S."/>
            <person name="Hoeft S.E."/>
            <person name="Switzer-Blum J."/>
            <person name="Kulp T."/>
            <person name="King G."/>
            <person name="Tabita R."/>
            <person name="Witte B."/>
            <person name="Santini J.M."/>
            <person name="Basu P."/>
            <person name="Hollibaugh J.T."/>
            <person name="Xie G."/>
            <person name="Stolz J.F."/>
            <person name="Richardson P."/>
        </authorList>
    </citation>
    <scope>NUCLEOTIDE SEQUENCE [LARGE SCALE GENOMIC DNA]</scope>
    <source>
        <strain>ATCC BAA-1101 / DSM 17681 / MLHE-1</strain>
    </source>
</reference>
<proteinExistence type="inferred from homology"/>
<protein>
    <recommendedName>
        <fullName evidence="1">Protein RecA</fullName>
    </recommendedName>
    <alternativeName>
        <fullName evidence="1">Recombinase A</fullName>
    </alternativeName>
</protein>
<gene>
    <name evidence="1" type="primary">recA</name>
    <name type="ordered locus">Mlg_1483</name>
</gene>
<name>RECA_ALKEH</name>